<gene>
    <name type="primary">Svmp3-Eoc1</name>
    <name type="ORF">EOC00001-SVMP</name>
</gene>
<organism>
    <name type="scientific">Echis ocellatus</name>
    <name type="common">Ocellated saw-scaled viper</name>
    <dbReference type="NCBI Taxonomy" id="99586"/>
    <lineage>
        <taxon>Eukaryota</taxon>
        <taxon>Metazoa</taxon>
        <taxon>Chordata</taxon>
        <taxon>Craniata</taxon>
        <taxon>Vertebrata</taxon>
        <taxon>Euteleostomi</taxon>
        <taxon>Lepidosauria</taxon>
        <taxon>Squamata</taxon>
        <taxon>Bifurcata</taxon>
        <taxon>Unidentata</taxon>
        <taxon>Episquamata</taxon>
        <taxon>Toxicofera</taxon>
        <taxon>Serpentes</taxon>
        <taxon>Colubroidea</taxon>
        <taxon>Viperidae</taxon>
        <taxon>Viperinae</taxon>
        <taxon>Echis</taxon>
    </lineage>
</organism>
<proteinExistence type="evidence at transcript level"/>
<reference key="1">
    <citation type="journal article" date="2006" name="PLoS Med.">
        <title>Bioinformatics and multiepitope DNA immunization to design rational snake antivenom.</title>
        <authorList>
            <person name="Wagstaff S.C."/>
            <person name="Laing G.D."/>
            <person name="Theakston R.D.G."/>
            <person name="Papaspyridis C."/>
            <person name="Harrison R.A."/>
        </authorList>
    </citation>
    <scope>NUCLEOTIDE SEQUENCE [LARGE SCALE MRNA]</scope>
    <source>
        <tissue>Venom gland</tissue>
    </source>
</reference>
<feature type="signal peptide" evidence="2">
    <location>
        <begin position="1"/>
        <end position="19"/>
    </location>
</feature>
<feature type="propeptide" id="PRO_0000340302" evidence="1">
    <location>
        <begin position="20"/>
        <end position="193"/>
    </location>
</feature>
<feature type="chain" id="PRO_0000340303" description="Zinc metalloproteinase-disintegrin-like Eoc1">
    <location>
        <begin position="194"/>
        <end position="614"/>
    </location>
</feature>
<feature type="domain" description="Peptidase M12B" evidence="4">
    <location>
        <begin position="202"/>
        <end position="398"/>
    </location>
</feature>
<feature type="domain" description="Disintegrin" evidence="3">
    <location>
        <begin position="406"/>
        <end position="492"/>
    </location>
</feature>
<feature type="short sequence motif" description="D/ECD-tripeptide">
    <location>
        <begin position="470"/>
        <end position="472"/>
    </location>
</feature>
<feature type="active site" evidence="4 5">
    <location>
        <position position="339"/>
    </location>
</feature>
<feature type="binding site" evidence="1">
    <location>
        <position position="338"/>
    </location>
    <ligand>
        <name>Zn(2+)</name>
        <dbReference type="ChEBI" id="CHEBI:29105"/>
        <note>catalytic</note>
    </ligand>
</feature>
<feature type="binding site" evidence="1">
    <location>
        <position position="342"/>
    </location>
    <ligand>
        <name>Zn(2+)</name>
        <dbReference type="ChEBI" id="CHEBI:29105"/>
        <note>catalytic</note>
    </ligand>
</feature>
<feature type="binding site" evidence="1">
    <location>
        <position position="348"/>
    </location>
    <ligand>
        <name>Zn(2+)</name>
        <dbReference type="ChEBI" id="CHEBI:29105"/>
        <note>catalytic</note>
    </ligand>
</feature>
<feature type="binding site" evidence="1">
    <location>
        <position position="408"/>
    </location>
    <ligand>
        <name>Ca(2+)</name>
        <dbReference type="ChEBI" id="CHEBI:29108"/>
    </ligand>
</feature>
<feature type="binding site" evidence="1">
    <location>
        <position position="411"/>
    </location>
    <ligand>
        <name>Ca(2+)</name>
        <dbReference type="ChEBI" id="CHEBI:29108"/>
    </ligand>
</feature>
<feature type="binding site" evidence="1">
    <location>
        <position position="413"/>
    </location>
    <ligand>
        <name>Ca(2+)</name>
        <dbReference type="ChEBI" id="CHEBI:29108"/>
    </ligand>
</feature>
<feature type="binding site" evidence="1">
    <location>
        <position position="415"/>
    </location>
    <ligand>
        <name>Ca(2+)</name>
        <dbReference type="ChEBI" id="CHEBI:29108"/>
    </ligand>
</feature>
<feature type="binding site" evidence="1">
    <location>
        <position position="418"/>
    </location>
    <ligand>
        <name>Ca(2+)</name>
        <dbReference type="ChEBI" id="CHEBI:29108"/>
    </ligand>
</feature>
<feature type="binding site" evidence="1">
    <location>
        <position position="421"/>
    </location>
    <ligand>
        <name>Ca(2+)</name>
        <dbReference type="ChEBI" id="CHEBI:29108"/>
    </ligand>
</feature>
<feature type="modified residue" description="Pyrrolidone carboxylic acid" evidence="1">
    <location>
        <position position="194"/>
    </location>
</feature>
<feature type="glycosylation site" description="N-linked (GlcNAc...) asparagine" evidence="2">
    <location>
        <position position="268"/>
    </location>
</feature>
<feature type="glycosylation site" description="N-linked (GlcNAc...) asparagine" evidence="2">
    <location>
        <position position="376"/>
    </location>
</feature>
<feature type="glycosylation site" description="N-linked (GlcNAc...) asparagine" evidence="2">
    <location>
        <position position="498"/>
    </location>
</feature>
<feature type="disulfide bond" evidence="1">
    <location>
        <begin position="313"/>
        <end position="393"/>
    </location>
</feature>
<feature type="disulfide bond" evidence="1">
    <location>
        <begin position="353"/>
        <end position="377"/>
    </location>
</feature>
<feature type="disulfide bond" evidence="1">
    <location>
        <begin position="355"/>
        <end position="360"/>
    </location>
</feature>
<feature type="disulfide bond" description="Interchain (with C-368 in VLAIP-B)" evidence="3 4">
    <location>
        <position position="368"/>
    </location>
</feature>
<feature type="disulfide bond" evidence="1">
    <location>
        <begin position="409"/>
        <end position="438"/>
    </location>
</feature>
<feature type="disulfide bond" evidence="1">
    <location>
        <begin position="420"/>
        <end position="433"/>
    </location>
</feature>
<feature type="disulfide bond" evidence="1">
    <location>
        <begin position="422"/>
        <end position="428"/>
    </location>
</feature>
<feature type="disulfide bond" evidence="1">
    <location>
        <begin position="432"/>
        <end position="455"/>
    </location>
</feature>
<feature type="disulfide bond" evidence="1">
    <location>
        <begin position="446"/>
        <end position="452"/>
    </location>
</feature>
<feature type="disulfide bond" evidence="1">
    <location>
        <begin position="451"/>
        <end position="477"/>
    </location>
</feature>
<feature type="disulfide bond" evidence="1">
    <location>
        <begin position="464"/>
        <end position="484"/>
    </location>
</feature>
<feature type="disulfide bond" evidence="1">
    <location>
        <begin position="471"/>
        <end position="503"/>
    </location>
</feature>
<feature type="disulfide bond" evidence="1">
    <location>
        <begin position="496"/>
        <end position="508"/>
    </location>
</feature>
<feature type="disulfide bond" evidence="1">
    <location>
        <begin position="515"/>
        <end position="565"/>
    </location>
</feature>
<feature type="disulfide bond" evidence="1">
    <location>
        <begin position="530"/>
        <end position="576"/>
    </location>
</feature>
<feature type="disulfide bond" evidence="1">
    <location>
        <begin position="543"/>
        <end position="553"/>
    </location>
</feature>
<feature type="disulfide bond" evidence="1">
    <location>
        <begin position="560"/>
        <end position="602"/>
    </location>
</feature>
<feature type="disulfide bond" evidence="1">
    <location>
        <begin position="596"/>
        <end position="607"/>
    </location>
</feature>
<name>VM3E1_ECHOC</name>
<sequence length="614" mass="68751">MQVLLITISLAVLPYLGSSIILESGIVNDYEVVNPQKVTAMLKGAVKQPEQKYEDTMQYEFKVKGEPVVLHLEKNKGLFSEDYSETHYSPDGREITTNPPVEDHCYYHGRIQNDADSSASISACNGLKGHFKLRGEMYFIEPLKIPDSEAHAVYKYENIEEEDEAPKMCGVKHTNRESDKSIKKASQLNLTPEQQRYLNTPKHIKVAIVADYLIFRKYGRNLFTIRAKIYEILNILNEIYKAFNIHVALVFLEIWSNGDKINLFPAANVTLDLFGKWRERDLMNRKNHDNTQLLTGMNFDGPTAGLGYVGTMCHPQFSAAVVQDHNKINFLVALAMAHELGHNLGMTHDEQFCTCGAKSCIMSATLSCEGSYRFSNCSREENRRYLINKMPQCILIKPSRTDIVSPPVCGNSLVEVGEDCDCGSPGYCRNPCCNAATCKLTPGSQCADGECCDQCRFTRAGTECRPARDECDKADLCTGQSAECPADQFQRNGQPCQNNSGYCYNGICPVMRNQCISLFGSRAIVAEDACFQFNSLGIDYGYCRKENGRKIPCAPEDVKCGRLYCFDNLPEHKNPCQIFYTPRDEDKGMVDPGTKCENGKVCINGKCVDVNTAY</sequence>
<keyword id="KW-0053">Apoptosis</keyword>
<keyword id="KW-0106">Calcium</keyword>
<keyword id="KW-1217">Cell adhesion impairing toxin</keyword>
<keyword id="KW-1015">Disulfide bond</keyword>
<keyword id="KW-1206">Fibrinogenolytic toxin</keyword>
<keyword id="KW-0325">Glycoprotein</keyword>
<keyword id="KW-1199">Hemostasis impairing toxin</keyword>
<keyword id="KW-0378">Hydrolase</keyword>
<keyword id="KW-0479">Metal-binding</keyword>
<keyword id="KW-0482">Metalloprotease</keyword>
<keyword id="KW-0645">Protease</keyword>
<keyword id="KW-0873">Pyrrolidone carboxylic acid</keyword>
<keyword id="KW-0964">Secreted</keyword>
<keyword id="KW-0732">Signal</keyword>
<keyword id="KW-0800">Toxin</keyword>
<keyword id="KW-0862">Zinc</keyword>
<keyword id="KW-0865">Zymogen</keyword>
<evidence type="ECO:0000250" key="1"/>
<evidence type="ECO:0000255" key="2"/>
<evidence type="ECO:0000255" key="3">
    <source>
        <dbReference type="PROSITE-ProRule" id="PRU00068"/>
    </source>
</evidence>
<evidence type="ECO:0000255" key="4">
    <source>
        <dbReference type="PROSITE-ProRule" id="PRU00276"/>
    </source>
</evidence>
<evidence type="ECO:0000255" key="5">
    <source>
        <dbReference type="PROSITE-ProRule" id="PRU10095"/>
    </source>
</evidence>
<evidence type="ECO:0000305" key="6"/>
<accession>Q2UXR0</accession>
<dbReference type="EC" id="3.4.24.-"/>
<dbReference type="EMBL" id="AM039691">
    <property type="protein sequence ID" value="CAJ01679.1"/>
    <property type="molecule type" value="mRNA"/>
</dbReference>
<dbReference type="SMR" id="Q2UXR0"/>
<dbReference type="MEROPS" id="M12.315"/>
<dbReference type="GlyCosmos" id="Q2UXR0">
    <property type="glycosylation" value="3 sites, No reported glycans"/>
</dbReference>
<dbReference type="GO" id="GO:0005576">
    <property type="term" value="C:extracellular region"/>
    <property type="evidence" value="ECO:0007669"/>
    <property type="project" value="UniProtKB-SubCell"/>
</dbReference>
<dbReference type="GO" id="GO:0005886">
    <property type="term" value="C:plasma membrane"/>
    <property type="evidence" value="ECO:0007669"/>
    <property type="project" value="TreeGrafter"/>
</dbReference>
<dbReference type="GO" id="GO:0046872">
    <property type="term" value="F:metal ion binding"/>
    <property type="evidence" value="ECO:0007669"/>
    <property type="project" value="UniProtKB-KW"/>
</dbReference>
<dbReference type="GO" id="GO:0004222">
    <property type="term" value="F:metalloendopeptidase activity"/>
    <property type="evidence" value="ECO:0007669"/>
    <property type="project" value="InterPro"/>
</dbReference>
<dbReference type="GO" id="GO:0090729">
    <property type="term" value="F:toxin activity"/>
    <property type="evidence" value="ECO:0007669"/>
    <property type="project" value="UniProtKB-KW"/>
</dbReference>
<dbReference type="GO" id="GO:0006915">
    <property type="term" value="P:apoptotic process"/>
    <property type="evidence" value="ECO:0007669"/>
    <property type="project" value="UniProtKB-KW"/>
</dbReference>
<dbReference type="GO" id="GO:0006508">
    <property type="term" value="P:proteolysis"/>
    <property type="evidence" value="ECO:0007669"/>
    <property type="project" value="UniProtKB-KW"/>
</dbReference>
<dbReference type="CDD" id="cd04269">
    <property type="entry name" value="ZnMc_adamalysin_II_like"/>
    <property type="match status" value="1"/>
</dbReference>
<dbReference type="FunFam" id="3.40.390.10:FF:000002">
    <property type="entry name" value="Disintegrin and metalloproteinase domain-containing protein 22"/>
    <property type="match status" value="1"/>
</dbReference>
<dbReference type="FunFam" id="4.10.70.10:FF:000001">
    <property type="entry name" value="Disintegrin and metalloproteinase domain-containing protein 22"/>
    <property type="match status" value="1"/>
</dbReference>
<dbReference type="Gene3D" id="3.40.390.10">
    <property type="entry name" value="Collagenase (Catalytic Domain)"/>
    <property type="match status" value="1"/>
</dbReference>
<dbReference type="Gene3D" id="4.10.70.10">
    <property type="entry name" value="Disintegrin domain"/>
    <property type="match status" value="1"/>
</dbReference>
<dbReference type="InterPro" id="IPR006586">
    <property type="entry name" value="ADAM_Cys-rich"/>
</dbReference>
<dbReference type="InterPro" id="IPR018358">
    <property type="entry name" value="Disintegrin_CS"/>
</dbReference>
<dbReference type="InterPro" id="IPR001762">
    <property type="entry name" value="Disintegrin_dom"/>
</dbReference>
<dbReference type="InterPro" id="IPR036436">
    <property type="entry name" value="Disintegrin_dom_sf"/>
</dbReference>
<dbReference type="InterPro" id="IPR024079">
    <property type="entry name" value="MetalloPept_cat_dom_sf"/>
</dbReference>
<dbReference type="InterPro" id="IPR001590">
    <property type="entry name" value="Peptidase_M12B"/>
</dbReference>
<dbReference type="InterPro" id="IPR002870">
    <property type="entry name" value="Peptidase_M12B_N"/>
</dbReference>
<dbReference type="InterPro" id="IPR034027">
    <property type="entry name" value="Reprolysin_adamalysin"/>
</dbReference>
<dbReference type="PANTHER" id="PTHR11905">
    <property type="entry name" value="ADAM A DISINTEGRIN AND METALLOPROTEASE DOMAIN"/>
    <property type="match status" value="1"/>
</dbReference>
<dbReference type="PANTHER" id="PTHR11905:SF32">
    <property type="entry name" value="DISINTEGRIN AND METALLOPROTEINASE DOMAIN-CONTAINING PROTEIN 28"/>
    <property type="match status" value="1"/>
</dbReference>
<dbReference type="Pfam" id="PF08516">
    <property type="entry name" value="ADAM_CR"/>
    <property type="match status" value="1"/>
</dbReference>
<dbReference type="Pfam" id="PF00200">
    <property type="entry name" value="Disintegrin"/>
    <property type="match status" value="1"/>
</dbReference>
<dbReference type="Pfam" id="PF01562">
    <property type="entry name" value="Pep_M12B_propep"/>
    <property type="match status" value="1"/>
</dbReference>
<dbReference type="Pfam" id="PF01421">
    <property type="entry name" value="Reprolysin"/>
    <property type="match status" value="1"/>
</dbReference>
<dbReference type="PRINTS" id="PR00289">
    <property type="entry name" value="DISINTEGRIN"/>
</dbReference>
<dbReference type="SMART" id="SM00608">
    <property type="entry name" value="ACR"/>
    <property type="match status" value="1"/>
</dbReference>
<dbReference type="SMART" id="SM00050">
    <property type="entry name" value="DISIN"/>
    <property type="match status" value="1"/>
</dbReference>
<dbReference type="SUPFAM" id="SSF57552">
    <property type="entry name" value="Blood coagulation inhibitor (disintegrin)"/>
    <property type="match status" value="1"/>
</dbReference>
<dbReference type="SUPFAM" id="SSF55486">
    <property type="entry name" value="Metalloproteases ('zincins'), catalytic domain"/>
    <property type="match status" value="1"/>
</dbReference>
<dbReference type="PROSITE" id="PS50215">
    <property type="entry name" value="ADAM_MEPRO"/>
    <property type="match status" value="1"/>
</dbReference>
<dbReference type="PROSITE" id="PS00427">
    <property type="entry name" value="DISINTEGRIN_1"/>
    <property type="match status" value="1"/>
</dbReference>
<dbReference type="PROSITE" id="PS50214">
    <property type="entry name" value="DISINTEGRIN_2"/>
    <property type="match status" value="1"/>
</dbReference>
<dbReference type="PROSITE" id="PS00142">
    <property type="entry name" value="ZINC_PROTEASE"/>
    <property type="match status" value="1"/>
</dbReference>
<protein>
    <recommendedName>
        <fullName>Zinc metalloproteinase-disintegrin-like Eoc1</fullName>
        <ecNumber>3.4.24.-</ecNumber>
    </recommendedName>
    <alternativeName>
        <fullName>Snake venom metalloproteinase</fullName>
        <shortName>SVMP</shortName>
    </alternativeName>
</protein>
<comment type="function">
    <text evidence="1">This metalloproteinase hydrolyzes azocasein, and oxidized insulin B-chain. Also hydrolyzes the alpha-chain (FGA) and more slowly the beta-chain of fibrinogen (FGB), without affecting the gamma-chain. Does not cleave fibrin. Inhibits endothelial cell adhesion to extracellular matrix proteins such as fibrinogen, fibronectin, vitronectin, collagen I, and collagen IV. Induces apoptosis in vascular endothelial cells (By similarity).</text>
</comment>
<comment type="cofactor">
    <cofactor evidence="1">
        <name>Zn(2+)</name>
        <dbReference type="ChEBI" id="CHEBI:29105"/>
    </cofactor>
    <text evidence="1">Binds 1 zinc ion per subunit.</text>
</comment>
<comment type="subunit">
    <text evidence="1">Heterodimer; disulfide-linked.</text>
</comment>
<comment type="subcellular location">
    <subcellularLocation>
        <location evidence="1">Secreted</location>
    </subcellularLocation>
</comment>
<comment type="tissue specificity">
    <text>Expressed by the venom gland.</text>
</comment>
<comment type="similarity">
    <text evidence="6">Belongs to the venom metalloproteinase (M12B) family. P-III subfamily. P-IIIc sub-subfamily.</text>
</comment>